<gene>
    <name type="primary">MT-CYB</name>
    <name type="synonym">COB</name>
    <name type="synonym">CYTB</name>
    <name type="synonym">MTCYB</name>
</gene>
<keyword id="KW-0249">Electron transport</keyword>
<keyword id="KW-0349">Heme</keyword>
<keyword id="KW-0408">Iron</keyword>
<keyword id="KW-0472">Membrane</keyword>
<keyword id="KW-0479">Metal-binding</keyword>
<keyword id="KW-0496">Mitochondrion</keyword>
<keyword id="KW-0999">Mitochondrion inner membrane</keyword>
<keyword id="KW-0679">Respiratory chain</keyword>
<keyword id="KW-0812">Transmembrane</keyword>
<keyword id="KW-1133">Transmembrane helix</keyword>
<keyword id="KW-0813">Transport</keyword>
<keyword id="KW-0830">Ubiquinone</keyword>
<evidence type="ECO:0000250" key="1"/>
<evidence type="ECO:0000250" key="2">
    <source>
        <dbReference type="UniProtKB" id="P00157"/>
    </source>
</evidence>
<evidence type="ECO:0000255" key="3">
    <source>
        <dbReference type="PROSITE-ProRule" id="PRU00967"/>
    </source>
</evidence>
<evidence type="ECO:0000255" key="4">
    <source>
        <dbReference type="PROSITE-ProRule" id="PRU00968"/>
    </source>
</evidence>
<geneLocation type="mitochondrion"/>
<organism>
    <name type="scientific">Fossa fossana</name>
    <name type="common">Malagasy civet</name>
    <name type="synonym">Viverra fossa</name>
    <dbReference type="NCBI Taxonomy" id="143320"/>
    <lineage>
        <taxon>Eukaryota</taxon>
        <taxon>Metazoa</taxon>
        <taxon>Chordata</taxon>
        <taxon>Craniata</taxon>
        <taxon>Vertebrata</taxon>
        <taxon>Euteleostomi</taxon>
        <taxon>Mammalia</taxon>
        <taxon>Eutheria</taxon>
        <taxon>Laurasiatheria</taxon>
        <taxon>Carnivora</taxon>
        <taxon>Feliformia</taxon>
        <taxon>Eupleridae</taxon>
        <taxon>Euplerinae</taxon>
        <taxon>Fossa</taxon>
    </lineage>
</organism>
<protein>
    <recommendedName>
        <fullName>Cytochrome b</fullName>
    </recommendedName>
    <alternativeName>
        <fullName>Complex III subunit 3</fullName>
    </alternativeName>
    <alternativeName>
        <fullName>Complex III subunit III</fullName>
    </alternativeName>
    <alternativeName>
        <fullName>Cytochrome b-c1 complex subunit 3</fullName>
    </alternativeName>
    <alternativeName>
        <fullName>Ubiquinol-cytochrome-c reductase complex cytochrome b subunit</fullName>
    </alternativeName>
</protein>
<comment type="function">
    <text evidence="2">Component of the ubiquinol-cytochrome c reductase complex (complex III or cytochrome b-c1 complex) that is part of the mitochondrial respiratory chain. The b-c1 complex mediates electron transfer from ubiquinol to cytochrome c. Contributes to the generation of a proton gradient across the mitochondrial membrane that is then used for ATP synthesis.</text>
</comment>
<comment type="cofactor">
    <cofactor evidence="2">
        <name>heme b</name>
        <dbReference type="ChEBI" id="CHEBI:60344"/>
    </cofactor>
    <text evidence="2">Binds 2 heme b groups non-covalently.</text>
</comment>
<comment type="subunit">
    <text evidence="2">The cytochrome bc1 complex contains 11 subunits: 3 respiratory subunits (MT-CYB, CYC1 and UQCRFS1), 2 core proteins (UQCRC1 and UQCRC2) and 6 low-molecular weight proteins (UQCRH/QCR6, UQCRB/QCR7, UQCRQ/QCR8, UQCR10/QCR9, UQCR11/QCR10 and a cleavage product of UQCRFS1). This cytochrome bc1 complex then forms a dimer.</text>
</comment>
<comment type="subcellular location">
    <subcellularLocation>
        <location evidence="2">Mitochondrion inner membrane</location>
        <topology evidence="2">Multi-pass membrane protein</topology>
    </subcellularLocation>
</comment>
<comment type="miscellaneous">
    <text evidence="1">Heme 1 (or BL or b562) is low-potential and absorbs at about 562 nm, and heme 2 (or BH or b566) is high-potential and absorbs at about 566 nm.</text>
</comment>
<comment type="similarity">
    <text evidence="3 4">Belongs to the cytochrome b family.</text>
</comment>
<comment type="caution">
    <text evidence="2">The full-length protein contains only eight transmembrane helices, not nine as predicted by bioinformatics tools.</text>
</comment>
<sequence length="379" mass="42538">MTNIRKSHPLIKIINESFIDLPAPSNISAWWNFGSLLGVCLILQILTGLFLAMHYTSDTATAFSSVTHICRDVNYGWIIRYMHANGASMFFICLFMHVGRGMYYGSHTFSETWNIGILLLFAVMATAFMGYVLPWGQMSFWGATVITNLLSAIPYIGTNLVEWIWGGFSVDKATLTRFFAFHFILPFIISALAAVHLLFLHETGSNNPSGLTSDSDKIPFHPYYTIKDILGLLLLILILMLLVLFSPDLLGDPDNYTPANPLNTPPHIKPEWYFLFAYAILRSIPNKLGGVTALVLSILILAILPLLNTSKQRGMMFRPLSQCLFWLLVADLLTLTWIGGQPVEHPFITIGQLASILYFLTILILMPISGMIENQLLKW</sequence>
<name>CYB_FOSFO</name>
<accession>Q85PP1</accession>
<reference key="1">
    <citation type="journal article" date="2003" name="Nature">
        <title>Single origin of Malagasy Carnivora from an African ancestor.</title>
        <authorList>
            <person name="Yoder A.D."/>
            <person name="Burns M.M."/>
            <person name="Zehr S."/>
            <person name="Delefosse T."/>
            <person name="Veron G."/>
            <person name="Goodman S.M."/>
            <person name="Flynn J.J."/>
        </authorList>
    </citation>
    <scope>NUCLEOTIDE SEQUENCE [GENOMIC DNA]</scope>
    <source>
        <strain>Isolate SMG-7539</strain>
    </source>
</reference>
<feature type="chain" id="PRO_0000060976" description="Cytochrome b">
    <location>
        <begin position="1"/>
        <end position="379"/>
    </location>
</feature>
<feature type="transmembrane region" description="Helical" evidence="2">
    <location>
        <begin position="33"/>
        <end position="53"/>
    </location>
</feature>
<feature type="transmembrane region" description="Helical" evidence="2">
    <location>
        <begin position="77"/>
        <end position="98"/>
    </location>
</feature>
<feature type="transmembrane region" description="Helical" evidence="2">
    <location>
        <begin position="113"/>
        <end position="133"/>
    </location>
</feature>
<feature type="transmembrane region" description="Helical" evidence="2">
    <location>
        <begin position="178"/>
        <end position="198"/>
    </location>
</feature>
<feature type="transmembrane region" description="Helical" evidence="2">
    <location>
        <begin position="226"/>
        <end position="246"/>
    </location>
</feature>
<feature type="transmembrane region" description="Helical" evidence="2">
    <location>
        <begin position="288"/>
        <end position="308"/>
    </location>
</feature>
<feature type="transmembrane region" description="Helical" evidence="2">
    <location>
        <begin position="320"/>
        <end position="340"/>
    </location>
</feature>
<feature type="transmembrane region" description="Helical" evidence="2">
    <location>
        <begin position="347"/>
        <end position="367"/>
    </location>
</feature>
<feature type="binding site" description="axial binding residue" evidence="2">
    <location>
        <position position="83"/>
    </location>
    <ligand>
        <name>heme b</name>
        <dbReference type="ChEBI" id="CHEBI:60344"/>
        <label>b562</label>
    </ligand>
    <ligandPart>
        <name>Fe</name>
        <dbReference type="ChEBI" id="CHEBI:18248"/>
    </ligandPart>
</feature>
<feature type="binding site" description="axial binding residue" evidence="2">
    <location>
        <position position="97"/>
    </location>
    <ligand>
        <name>heme b</name>
        <dbReference type="ChEBI" id="CHEBI:60344"/>
        <label>b566</label>
    </ligand>
    <ligandPart>
        <name>Fe</name>
        <dbReference type="ChEBI" id="CHEBI:18248"/>
    </ligandPart>
</feature>
<feature type="binding site" description="axial binding residue" evidence="2">
    <location>
        <position position="182"/>
    </location>
    <ligand>
        <name>heme b</name>
        <dbReference type="ChEBI" id="CHEBI:60344"/>
        <label>b562</label>
    </ligand>
    <ligandPart>
        <name>Fe</name>
        <dbReference type="ChEBI" id="CHEBI:18248"/>
    </ligandPart>
</feature>
<feature type="binding site" description="axial binding residue" evidence="2">
    <location>
        <position position="196"/>
    </location>
    <ligand>
        <name>heme b</name>
        <dbReference type="ChEBI" id="CHEBI:60344"/>
        <label>b566</label>
    </ligand>
    <ligandPart>
        <name>Fe</name>
        <dbReference type="ChEBI" id="CHEBI:18248"/>
    </ligandPart>
</feature>
<feature type="binding site" evidence="2">
    <location>
        <position position="201"/>
    </location>
    <ligand>
        <name>a ubiquinone</name>
        <dbReference type="ChEBI" id="CHEBI:16389"/>
    </ligand>
</feature>
<dbReference type="EMBL" id="AY170097">
    <property type="protein sequence ID" value="AAN85616.1"/>
    <property type="molecule type" value="Genomic_DNA"/>
</dbReference>
<dbReference type="SMR" id="Q85PP1"/>
<dbReference type="GO" id="GO:0005743">
    <property type="term" value="C:mitochondrial inner membrane"/>
    <property type="evidence" value="ECO:0007669"/>
    <property type="project" value="UniProtKB-SubCell"/>
</dbReference>
<dbReference type="GO" id="GO:0045275">
    <property type="term" value="C:respiratory chain complex III"/>
    <property type="evidence" value="ECO:0007669"/>
    <property type="project" value="InterPro"/>
</dbReference>
<dbReference type="GO" id="GO:0046872">
    <property type="term" value="F:metal ion binding"/>
    <property type="evidence" value="ECO:0007669"/>
    <property type="project" value="UniProtKB-KW"/>
</dbReference>
<dbReference type="GO" id="GO:0008121">
    <property type="term" value="F:ubiquinol-cytochrome-c reductase activity"/>
    <property type="evidence" value="ECO:0007669"/>
    <property type="project" value="InterPro"/>
</dbReference>
<dbReference type="GO" id="GO:0006122">
    <property type="term" value="P:mitochondrial electron transport, ubiquinol to cytochrome c"/>
    <property type="evidence" value="ECO:0007669"/>
    <property type="project" value="TreeGrafter"/>
</dbReference>
<dbReference type="CDD" id="cd00290">
    <property type="entry name" value="cytochrome_b_C"/>
    <property type="match status" value="1"/>
</dbReference>
<dbReference type="CDD" id="cd00284">
    <property type="entry name" value="Cytochrome_b_N"/>
    <property type="match status" value="1"/>
</dbReference>
<dbReference type="FunFam" id="1.20.810.10:FF:000002">
    <property type="entry name" value="Cytochrome b"/>
    <property type="match status" value="1"/>
</dbReference>
<dbReference type="Gene3D" id="1.20.810.10">
    <property type="entry name" value="Cytochrome Bc1 Complex, Chain C"/>
    <property type="match status" value="1"/>
</dbReference>
<dbReference type="InterPro" id="IPR005798">
    <property type="entry name" value="Cyt_b/b6_C"/>
</dbReference>
<dbReference type="InterPro" id="IPR036150">
    <property type="entry name" value="Cyt_b/b6_C_sf"/>
</dbReference>
<dbReference type="InterPro" id="IPR005797">
    <property type="entry name" value="Cyt_b/b6_N"/>
</dbReference>
<dbReference type="InterPro" id="IPR027387">
    <property type="entry name" value="Cytb/b6-like_sf"/>
</dbReference>
<dbReference type="InterPro" id="IPR030689">
    <property type="entry name" value="Cytochrome_b"/>
</dbReference>
<dbReference type="InterPro" id="IPR048260">
    <property type="entry name" value="Cytochrome_b_C_euk/bac"/>
</dbReference>
<dbReference type="InterPro" id="IPR048259">
    <property type="entry name" value="Cytochrome_b_N_euk/bac"/>
</dbReference>
<dbReference type="InterPro" id="IPR016174">
    <property type="entry name" value="Di-haem_cyt_TM"/>
</dbReference>
<dbReference type="PANTHER" id="PTHR19271">
    <property type="entry name" value="CYTOCHROME B"/>
    <property type="match status" value="1"/>
</dbReference>
<dbReference type="PANTHER" id="PTHR19271:SF16">
    <property type="entry name" value="CYTOCHROME B"/>
    <property type="match status" value="1"/>
</dbReference>
<dbReference type="Pfam" id="PF00032">
    <property type="entry name" value="Cytochrom_B_C"/>
    <property type="match status" value="1"/>
</dbReference>
<dbReference type="Pfam" id="PF00033">
    <property type="entry name" value="Cytochrome_B"/>
    <property type="match status" value="1"/>
</dbReference>
<dbReference type="PIRSF" id="PIRSF038885">
    <property type="entry name" value="COB"/>
    <property type="match status" value="1"/>
</dbReference>
<dbReference type="SUPFAM" id="SSF81648">
    <property type="entry name" value="a domain/subunit of cytochrome bc1 complex (Ubiquinol-cytochrome c reductase)"/>
    <property type="match status" value="1"/>
</dbReference>
<dbReference type="SUPFAM" id="SSF81342">
    <property type="entry name" value="Transmembrane di-heme cytochromes"/>
    <property type="match status" value="1"/>
</dbReference>
<dbReference type="PROSITE" id="PS51003">
    <property type="entry name" value="CYTB_CTER"/>
    <property type="match status" value="1"/>
</dbReference>
<dbReference type="PROSITE" id="PS51002">
    <property type="entry name" value="CYTB_NTER"/>
    <property type="match status" value="1"/>
</dbReference>
<proteinExistence type="inferred from homology"/>